<proteinExistence type="inferred from homology"/>
<protein>
    <recommendedName>
        <fullName evidence="1">Fluoride-specific ion channel FluC 2</fullName>
    </recommendedName>
</protein>
<dbReference type="EMBL" id="AE005672">
    <property type="protein sequence ID" value="AAK75399.1"/>
    <property type="molecule type" value="Genomic_DNA"/>
</dbReference>
<dbReference type="PIR" id="F95150">
    <property type="entry name" value="F95150"/>
</dbReference>
<dbReference type="SMR" id="Q97QC4"/>
<dbReference type="PaxDb" id="170187-SP_1295"/>
<dbReference type="EnsemblBacteria" id="AAK75399">
    <property type="protein sequence ID" value="AAK75399"/>
    <property type="gene ID" value="SP_1295"/>
</dbReference>
<dbReference type="KEGG" id="spn:SP_1295"/>
<dbReference type="eggNOG" id="COG0239">
    <property type="taxonomic scope" value="Bacteria"/>
</dbReference>
<dbReference type="PhylomeDB" id="Q97QC4"/>
<dbReference type="BioCyc" id="SPNE170187:G1FZB-1309-MONOMER"/>
<dbReference type="Proteomes" id="UP000000585">
    <property type="component" value="Chromosome"/>
</dbReference>
<dbReference type="GO" id="GO:0005886">
    <property type="term" value="C:plasma membrane"/>
    <property type="evidence" value="ECO:0007669"/>
    <property type="project" value="UniProtKB-SubCell"/>
</dbReference>
<dbReference type="GO" id="GO:0062054">
    <property type="term" value="F:fluoride channel activity"/>
    <property type="evidence" value="ECO:0007669"/>
    <property type="project" value="UniProtKB-UniRule"/>
</dbReference>
<dbReference type="GO" id="GO:0046872">
    <property type="term" value="F:metal ion binding"/>
    <property type="evidence" value="ECO:0007669"/>
    <property type="project" value="UniProtKB-KW"/>
</dbReference>
<dbReference type="GO" id="GO:0140114">
    <property type="term" value="P:cellular detoxification of fluoride"/>
    <property type="evidence" value="ECO:0007669"/>
    <property type="project" value="UniProtKB-UniRule"/>
</dbReference>
<dbReference type="HAMAP" id="MF_00454">
    <property type="entry name" value="FluC"/>
    <property type="match status" value="1"/>
</dbReference>
<dbReference type="InterPro" id="IPR003691">
    <property type="entry name" value="FluC"/>
</dbReference>
<dbReference type="NCBIfam" id="NF010817">
    <property type="entry name" value="PRK14221.1"/>
    <property type="match status" value="1"/>
</dbReference>
<dbReference type="PANTHER" id="PTHR28259">
    <property type="entry name" value="FLUORIDE EXPORT PROTEIN 1-RELATED"/>
    <property type="match status" value="1"/>
</dbReference>
<dbReference type="PANTHER" id="PTHR28259:SF1">
    <property type="entry name" value="FLUORIDE EXPORT PROTEIN 1-RELATED"/>
    <property type="match status" value="1"/>
</dbReference>
<dbReference type="Pfam" id="PF02537">
    <property type="entry name" value="CRCB"/>
    <property type="match status" value="1"/>
</dbReference>
<sequence length="124" mass="13737">MKKEQFYPLGIFLAAMLGGLVRYLVSTWLPASPDFPWGTLFVNYLGIFCLIYLVKGYLVYKGTSKGLILALGTGFCGGLTTFSSLMLDTVKLLDTGRYLSLILYLLLSIGGGLLLAYYLGRKKW</sequence>
<reference key="1">
    <citation type="journal article" date="2001" name="Science">
        <title>Complete genome sequence of a virulent isolate of Streptococcus pneumoniae.</title>
        <authorList>
            <person name="Tettelin H."/>
            <person name="Nelson K.E."/>
            <person name="Paulsen I.T."/>
            <person name="Eisen J.A."/>
            <person name="Read T.D."/>
            <person name="Peterson S.N."/>
            <person name="Heidelberg J.F."/>
            <person name="DeBoy R.T."/>
            <person name="Haft D.H."/>
            <person name="Dodson R.J."/>
            <person name="Durkin A.S."/>
            <person name="Gwinn M.L."/>
            <person name="Kolonay J.F."/>
            <person name="Nelson W.C."/>
            <person name="Peterson J.D."/>
            <person name="Umayam L.A."/>
            <person name="White O."/>
            <person name="Salzberg S.L."/>
            <person name="Lewis M.R."/>
            <person name="Radune D."/>
            <person name="Holtzapple E.K."/>
            <person name="Khouri H.M."/>
            <person name="Wolf A.M."/>
            <person name="Utterback T.R."/>
            <person name="Hansen C.L."/>
            <person name="McDonald L.A."/>
            <person name="Feldblyum T.V."/>
            <person name="Angiuoli S.V."/>
            <person name="Dickinson T."/>
            <person name="Hickey E.K."/>
            <person name="Holt I.E."/>
            <person name="Loftus B.J."/>
            <person name="Yang F."/>
            <person name="Smith H.O."/>
            <person name="Venter J.C."/>
            <person name="Dougherty B.A."/>
            <person name="Morrison D.A."/>
            <person name="Hollingshead S.K."/>
            <person name="Fraser C.M."/>
        </authorList>
    </citation>
    <scope>NUCLEOTIDE SEQUENCE [LARGE SCALE GENOMIC DNA]</scope>
    <source>
        <strain>ATCC BAA-334 / TIGR4</strain>
    </source>
</reference>
<keyword id="KW-1003">Cell membrane</keyword>
<keyword id="KW-0407">Ion channel</keyword>
<keyword id="KW-0406">Ion transport</keyword>
<keyword id="KW-0472">Membrane</keyword>
<keyword id="KW-0479">Metal-binding</keyword>
<keyword id="KW-1185">Reference proteome</keyword>
<keyword id="KW-0915">Sodium</keyword>
<keyword id="KW-0812">Transmembrane</keyword>
<keyword id="KW-1133">Transmembrane helix</keyword>
<keyword id="KW-0813">Transport</keyword>
<name>FLUC2_STRPN</name>
<gene>
    <name evidence="1" type="primary">fluC2</name>
    <name evidence="1" type="synonym">crcB2</name>
    <name type="ordered locus">SP_1295</name>
</gene>
<organism>
    <name type="scientific">Streptococcus pneumoniae serotype 4 (strain ATCC BAA-334 / TIGR4)</name>
    <dbReference type="NCBI Taxonomy" id="170187"/>
    <lineage>
        <taxon>Bacteria</taxon>
        <taxon>Bacillati</taxon>
        <taxon>Bacillota</taxon>
        <taxon>Bacilli</taxon>
        <taxon>Lactobacillales</taxon>
        <taxon>Streptococcaceae</taxon>
        <taxon>Streptococcus</taxon>
    </lineage>
</organism>
<evidence type="ECO:0000255" key="1">
    <source>
        <dbReference type="HAMAP-Rule" id="MF_00454"/>
    </source>
</evidence>
<comment type="function">
    <text evidence="1">Fluoride-specific ion channel. Important for reducing fluoride concentration in the cell, thus reducing its toxicity.</text>
</comment>
<comment type="catalytic activity">
    <reaction evidence="1">
        <text>fluoride(in) = fluoride(out)</text>
        <dbReference type="Rhea" id="RHEA:76159"/>
        <dbReference type="ChEBI" id="CHEBI:17051"/>
    </reaction>
    <physiologicalReaction direction="left-to-right" evidence="1">
        <dbReference type="Rhea" id="RHEA:76160"/>
    </physiologicalReaction>
</comment>
<comment type="activity regulation">
    <text evidence="1">Na(+) is not transported, but it plays an essential structural role and its presence is essential for fluoride channel function.</text>
</comment>
<comment type="subcellular location">
    <subcellularLocation>
        <location evidence="1">Cell membrane</location>
        <topology evidence="1">Multi-pass membrane protein</topology>
    </subcellularLocation>
</comment>
<comment type="similarity">
    <text evidence="1">Belongs to the fluoride channel Fluc/FEX (TC 1.A.43) family.</text>
</comment>
<feature type="chain" id="PRO_0000110195" description="Fluoride-specific ion channel FluC 2">
    <location>
        <begin position="1"/>
        <end position="124"/>
    </location>
</feature>
<feature type="transmembrane region" description="Helical" evidence="1">
    <location>
        <begin position="9"/>
        <end position="29"/>
    </location>
</feature>
<feature type="transmembrane region" description="Helical" evidence="1">
    <location>
        <begin position="34"/>
        <end position="54"/>
    </location>
</feature>
<feature type="transmembrane region" description="Helical" evidence="1">
    <location>
        <begin position="67"/>
        <end position="87"/>
    </location>
</feature>
<feature type="transmembrane region" description="Helical" evidence="1">
    <location>
        <begin position="99"/>
        <end position="119"/>
    </location>
</feature>
<feature type="binding site" evidence="1">
    <location>
        <position position="77"/>
    </location>
    <ligand>
        <name>Na(+)</name>
        <dbReference type="ChEBI" id="CHEBI:29101"/>
        <note>structural</note>
    </ligand>
</feature>
<feature type="binding site" evidence="1">
    <location>
        <position position="80"/>
    </location>
    <ligand>
        <name>Na(+)</name>
        <dbReference type="ChEBI" id="CHEBI:29101"/>
        <note>structural</note>
    </ligand>
</feature>
<accession>Q97QC4</accession>